<accession>Q8IKD3</accession>
<accession>B3FEM8</accession>
<protein>
    <recommendedName>
        <fullName evidence="12">cGMP-specific 3',5'-cyclic phosphodiesterase delta</fullName>
        <shortName evidence="10">PfPDEdelta</shortName>
        <ecNumber evidence="13">3.1.4.35</ecNumber>
    </recommendedName>
</protein>
<gene>
    <name evidence="11" type="primary">PDEdelta</name>
    <name evidence="11" type="synonym">PDE4</name>
    <name evidence="15" type="ORF">PF3D7_1470500</name>
</gene>
<sequence>MNEYNNDNMEQEKEKKKEEQKYKNIIKKEYFIFPRLYDKNKEIEYNKLRIHNIKEYICIHLTISLFIILIECFVFSFNLNIKDTTYVEICVVIFSILNCLMHIVVLIKMYFFTSESVYTKGVFIGYIVLNQVFQFLSLYFFTKRNEQSKNDIAHLKYYDNSFNLYVHFFVDSVFILCLPALSFFLSVLFMMMFLCLNILLINMIKFNKTNYGSDIYHICLLSVVLLMFLILRYMMEERNRLLFFFIKDMMFDNYKKWYSDYIGAHYDKDKDSTTINGDNNKYEKEKCEDYKFLFSNKCILFHDFTLNACYKDYYSMICFLNKLLKSCNIKEDMSSNTSVNINGDTYQNMNFHDNINSNIPKNYNSFYEELKKNLNESDILTIAYEVEVLKNIKKINCDEIGKNWDYSFIDSEYGKSTLVILEVGYHLISPYIENNENKKKKLQLFLLLINSMYFPNPYHNANHGATVCHLSKCLAHITDYDSYLNNTYMICYLIASIAHDVGHPGKTNSYLSETNHILSIRYNDMSILENYHCSITFSILQLIGFDFLINNEDTKLVEKNNYTNMRKFIIELIISTDMKLHFEYVDIFKKRKKSQNFDISDTDAINLGTINIKLADIGHTCLKWKDHAKWTMLVSEEFFSQKRVEELHKNKNIDPLNFSNFGKEDNIDEGMIFNYENIYINYINNINNINTYDYSYIKLNFIHHHDFVKSIPSTQVYFFEIIVMPLIKELQSMEKSKKEITQKVLHNLNINLQTWRLIEKNINLFYNTEKMTGTDYYKNLEKQKLLRGIRLLDIAEEDVISLTKNFKEEIKHGKL</sequence>
<reference evidence="14" key="1">
    <citation type="journal article" date="2008" name="Int. J. Parasitol.">
        <title>Cyclic nucleotide-specific phosphodiesterases of Plasmodium falciparum: PfPDEalpha, a non-essential cGMP-specific PDE that is an integral membrane protein.</title>
        <authorList>
            <person name="Wentzinger L."/>
            <person name="Bopp S."/>
            <person name="Tenor H."/>
            <person name="Klar J."/>
            <person name="Brun R."/>
            <person name="Beck H.P."/>
            <person name="Seebeck T."/>
        </authorList>
    </citation>
    <scope>NUCLEOTIDE SEQUENCE [MRNA]</scope>
    <scope>DEVELOPMENTAL STAGE</scope>
    <source>
        <strain evidence="14">3D7</strain>
    </source>
</reference>
<reference evidence="16" key="2">
    <citation type="journal article" date="2002" name="Nature">
        <title>Genome sequence of the human malaria parasite Plasmodium falciparum.</title>
        <authorList>
            <person name="Gardner M.J."/>
            <person name="Hall N."/>
            <person name="Fung E."/>
            <person name="White O."/>
            <person name="Berriman M."/>
            <person name="Hyman R.W."/>
            <person name="Carlton J.M."/>
            <person name="Pain A."/>
            <person name="Nelson K.E."/>
            <person name="Bowman S."/>
            <person name="Paulsen I.T."/>
            <person name="James K.D."/>
            <person name="Eisen J.A."/>
            <person name="Rutherford K.M."/>
            <person name="Salzberg S.L."/>
            <person name="Craig A."/>
            <person name="Kyes S."/>
            <person name="Chan M.-S."/>
            <person name="Nene V."/>
            <person name="Shallom S.J."/>
            <person name="Suh B."/>
            <person name="Peterson J."/>
            <person name="Angiuoli S."/>
            <person name="Pertea M."/>
            <person name="Allen J."/>
            <person name="Selengut J."/>
            <person name="Haft D."/>
            <person name="Mather M.W."/>
            <person name="Vaidya A.B."/>
            <person name="Martin D.M.A."/>
            <person name="Fairlamb A.H."/>
            <person name="Fraunholz M.J."/>
            <person name="Roos D.S."/>
            <person name="Ralph S.A."/>
            <person name="McFadden G.I."/>
            <person name="Cummings L.M."/>
            <person name="Subramanian G.M."/>
            <person name="Mungall C."/>
            <person name="Venter J.C."/>
            <person name="Carucci D.J."/>
            <person name="Hoffman S.L."/>
            <person name="Newbold C."/>
            <person name="Davis R.W."/>
            <person name="Fraser C.M."/>
            <person name="Barrell B.G."/>
        </authorList>
    </citation>
    <scope>NUCLEOTIDE SEQUENCE [LARGE SCALE GENOMIC DNA]</scope>
    <source>
        <strain evidence="16">3D7</strain>
    </source>
</reference>
<reference evidence="12" key="3">
    <citation type="journal article" date="2008" name="Mol. Microbiol.">
        <title>Disruption of a Plasmodium falciparum cyclic nucleotide phosphodiesterase gene causes aberrant gametogenesis.</title>
        <authorList>
            <person name="Taylor C.J."/>
            <person name="McRobert L."/>
            <person name="Baker D.A."/>
        </authorList>
    </citation>
    <scope>FUNCTION</scope>
    <scope>CATALYTIC ACTIVITY</scope>
    <scope>PATHWAY</scope>
    <scope>DEVELOPMENTAL STAGE</scope>
    <scope>DISRUPTION PHENOTYPE</scope>
</reference>
<organism evidence="14">
    <name type="scientific">Plasmodium falciparum (isolate 3D7)</name>
    <dbReference type="NCBI Taxonomy" id="36329"/>
    <lineage>
        <taxon>Eukaryota</taxon>
        <taxon>Sar</taxon>
        <taxon>Alveolata</taxon>
        <taxon>Apicomplexa</taxon>
        <taxon>Aconoidasida</taxon>
        <taxon>Haemosporida</taxon>
        <taxon>Plasmodiidae</taxon>
        <taxon>Plasmodium</taxon>
        <taxon>Plasmodium (Laverania)</taxon>
    </lineage>
</organism>
<name>PDED_PLAF7</name>
<feature type="chain" id="PRO_0000452650" description="cGMP-specific 3',5'-cyclic phosphodiesterase delta">
    <location>
        <begin position="1"/>
        <end position="815"/>
    </location>
</feature>
<feature type="topological domain" description="Cytoplasmic" evidence="12">
    <location>
        <begin position="1"/>
        <end position="56"/>
    </location>
</feature>
<feature type="transmembrane region" description="Helical" evidence="2">
    <location>
        <begin position="57"/>
        <end position="77"/>
    </location>
</feature>
<feature type="topological domain" description="Extracellular" evidence="12">
    <location>
        <begin position="78"/>
        <end position="86"/>
    </location>
</feature>
<feature type="transmembrane region" description="Helical" evidence="2">
    <location>
        <begin position="87"/>
        <end position="107"/>
    </location>
</feature>
<feature type="topological domain" description="Cytoplasmic" evidence="12">
    <location>
        <begin position="108"/>
        <end position="120"/>
    </location>
</feature>
<feature type="transmembrane region" description="Helical" evidence="2">
    <location>
        <begin position="121"/>
        <end position="141"/>
    </location>
</feature>
<feature type="topological domain" description="Extracellular" evidence="12">
    <location>
        <begin position="142"/>
        <end position="160"/>
    </location>
</feature>
<feature type="transmembrane region" description="Helical" evidence="2">
    <location>
        <begin position="161"/>
        <end position="181"/>
    </location>
</feature>
<feature type="topological domain" description="Cytoplasmic" evidence="12">
    <location>
        <begin position="182"/>
        <end position="183"/>
    </location>
</feature>
<feature type="transmembrane region" description="Helical" evidence="2">
    <location>
        <begin position="184"/>
        <end position="204"/>
    </location>
</feature>
<feature type="topological domain" description="Extracellular" evidence="12">
    <location>
        <begin position="205"/>
        <end position="210"/>
    </location>
</feature>
<feature type="transmembrane region" description="Helical" evidence="2">
    <location>
        <begin position="211"/>
        <end position="231"/>
    </location>
</feature>
<feature type="topological domain" description="Cytoplasmic" evidence="12">
    <location>
        <begin position="232"/>
        <end position="815"/>
    </location>
</feature>
<feature type="domain" description="PDEase" evidence="6">
    <location>
        <begin position="384"/>
        <end position="762"/>
    </location>
</feature>
<feature type="active site" description="Proton donor" evidence="3">
    <location>
        <position position="459"/>
    </location>
</feature>
<feature type="binding site" evidence="1">
    <location>
        <begin position="459"/>
        <end position="463"/>
    </location>
    <ligand>
        <name>3',5'-cyclic GMP</name>
        <dbReference type="ChEBI" id="CHEBI:57746"/>
    </ligand>
</feature>
<feature type="binding site" evidence="4">
    <location>
        <position position="463"/>
    </location>
    <ligand>
        <name>a divalent metal cation</name>
        <dbReference type="ChEBI" id="CHEBI:60240"/>
        <label>1</label>
    </ligand>
</feature>
<feature type="binding site" evidence="4">
    <location>
        <position position="499"/>
    </location>
    <ligand>
        <name>a divalent metal cation</name>
        <dbReference type="ChEBI" id="CHEBI:60240"/>
        <label>1</label>
    </ligand>
</feature>
<feature type="binding site" evidence="1">
    <location>
        <position position="500"/>
    </location>
    <ligand>
        <name>3',5'-cyclic GMP</name>
        <dbReference type="ChEBI" id="CHEBI:57746"/>
    </ligand>
</feature>
<feature type="binding site" evidence="4">
    <location>
        <position position="500"/>
    </location>
    <ligand>
        <name>a divalent metal cation</name>
        <dbReference type="ChEBI" id="CHEBI:60240"/>
        <label>1</label>
    </ligand>
</feature>
<feature type="binding site" evidence="4">
    <location>
        <position position="500"/>
    </location>
    <ligand>
        <name>a divalent metal cation</name>
        <dbReference type="ChEBI" id="CHEBI:60240"/>
        <label>2</label>
    </ligand>
</feature>
<feature type="binding site" evidence="1">
    <location>
        <position position="616"/>
    </location>
    <ligand>
        <name>3',5'-cyclic GMP</name>
        <dbReference type="ChEBI" id="CHEBI:57746"/>
    </ligand>
</feature>
<feature type="binding site" evidence="4">
    <location>
        <position position="616"/>
    </location>
    <ligand>
        <name>a divalent metal cation</name>
        <dbReference type="ChEBI" id="CHEBI:60240"/>
        <label>1</label>
    </ligand>
</feature>
<feature type="binding site" evidence="1">
    <location>
        <position position="715"/>
    </location>
    <ligand>
        <name>3',5'-cyclic GMP</name>
        <dbReference type="ChEBI" id="CHEBI:57746"/>
    </ligand>
</feature>
<feature type="glycosylation site" description="N-linked (GlcNAc...) asparagine" evidence="5">
    <location>
        <position position="207"/>
    </location>
</feature>
<dbReference type="EC" id="3.1.4.35" evidence="13"/>
<dbReference type="EMBL" id="EF673788">
    <property type="protein sequence ID" value="ABS50260.1"/>
    <property type="molecule type" value="mRNA"/>
</dbReference>
<dbReference type="EMBL" id="LN999946">
    <property type="protein sequence ID" value="CZU00402.1"/>
    <property type="molecule type" value="Genomic_DNA"/>
</dbReference>
<dbReference type="RefSeq" id="XP_001348846.2">
    <property type="nucleotide sequence ID" value="XM_001348810.2"/>
</dbReference>
<dbReference type="SMR" id="Q8IKD3"/>
<dbReference type="FunCoup" id="Q8IKD3">
    <property type="interactions" value="30"/>
</dbReference>
<dbReference type="STRING" id="36329.Q8IKD3"/>
<dbReference type="GlyCosmos" id="Q8IKD3">
    <property type="glycosylation" value="1 site, No reported glycans"/>
</dbReference>
<dbReference type="PaxDb" id="5833-PF14_0672"/>
<dbReference type="EnsemblProtists" id="CZU00402">
    <property type="protein sequence ID" value="CZU00402"/>
    <property type="gene ID" value="PF3D7_1470500"/>
</dbReference>
<dbReference type="GeneID" id="812254"/>
<dbReference type="KEGG" id="pfa:PF3D7_1470500"/>
<dbReference type="VEuPathDB" id="PlasmoDB:PF3D7_1470500"/>
<dbReference type="HOGENOM" id="CLU_346656_0_0_1"/>
<dbReference type="InParanoid" id="Q8IKD3"/>
<dbReference type="OMA" id="YIIINQV"/>
<dbReference type="OrthoDB" id="68317at2759"/>
<dbReference type="PhylomeDB" id="Q8IKD3"/>
<dbReference type="Reactome" id="R-PFA-111957">
    <property type="pathway name" value="Cam-PDE 1 activation"/>
</dbReference>
<dbReference type="Reactome" id="R-PFA-165160">
    <property type="pathway name" value="PDE3B signalling"/>
</dbReference>
<dbReference type="Reactome" id="R-PFA-180024">
    <property type="pathway name" value="DARPP-32 events"/>
</dbReference>
<dbReference type="Reactome" id="R-PFA-418457">
    <property type="pathway name" value="cGMP effects"/>
</dbReference>
<dbReference type="Reactome" id="R-PFA-418555">
    <property type="pathway name" value="G alpha (s) signalling events"/>
</dbReference>
<dbReference type="UniPathway" id="UPA00763">
    <property type="reaction ID" value="UER00748"/>
</dbReference>
<dbReference type="Proteomes" id="UP000001450">
    <property type="component" value="Chromosome 14"/>
</dbReference>
<dbReference type="GO" id="GO:0016020">
    <property type="term" value="C:membrane"/>
    <property type="evidence" value="ECO:0007669"/>
    <property type="project" value="UniProtKB-SubCell"/>
</dbReference>
<dbReference type="GO" id="GO:0004115">
    <property type="term" value="F:3',5'-cyclic-AMP phosphodiesterase activity"/>
    <property type="evidence" value="ECO:0000318"/>
    <property type="project" value="GO_Central"/>
</dbReference>
<dbReference type="GO" id="GO:0047555">
    <property type="term" value="F:3',5'-cyclic-GMP phosphodiesterase activity"/>
    <property type="evidence" value="ECO:0000315"/>
    <property type="project" value="UniProtKB"/>
</dbReference>
<dbReference type="GO" id="GO:0004114">
    <property type="term" value="F:3',5'-cyclic-nucleotide phosphodiesterase activity"/>
    <property type="evidence" value="ECO:0000250"/>
    <property type="project" value="GeneDB"/>
</dbReference>
<dbReference type="GO" id="GO:0030552">
    <property type="term" value="F:cAMP binding"/>
    <property type="evidence" value="ECO:0000250"/>
    <property type="project" value="GeneDB"/>
</dbReference>
<dbReference type="GO" id="GO:0046872">
    <property type="term" value="F:metal ion binding"/>
    <property type="evidence" value="ECO:0007669"/>
    <property type="project" value="UniProtKB-KW"/>
</dbReference>
<dbReference type="GO" id="GO:0019933">
    <property type="term" value="P:cAMP-mediated signaling"/>
    <property type="evidence" value="ECO:0000318"/>
    <property type="project" value="GO_Central"/>
</dbReference>
<dbReference type="GO" id="GO:0046069">
    <property type="term" value="P:cGMP catabolic process"/>
    <property type="evidence" value="ECO:0000315"/>
    <property type="project" value="UniProtKB"/>
</dbReference>
<dbReference type="GO" id="GO:0009187">
    <property type="term" value="P:cyclic nucleotide metabolic process"/>
    <property type="evidence" value="ECO:0000250"/>
    <property type="project" value="GeneDB"/>
</dbReference>
<dbReference type="GO" id="GO:0007276">
    <property type="term" value="P:gamete generation"/>
    <property type="evidence" value="ECO:0000315"/>
    <property type="project" value="UniProtKB"/>
</dbReference>
<dbReference type="CDD" id="cd00077">
    <property type="entry name" value="HDc"/>
    <property type="match status" value="1"/>
</dbReference>
<dbReference type="Gene3D" id="1.10.1300.10">
    <property type="entry name" value="3'5'-cyclic nucleotide phosphodiesterase, catalytic domain"/>
    <property type="match status" value="1"/>
</dbReference>
<dbReference type="InterPro" id="IPR003607">
    <property type="entry name" value="HD/PDEase_dom"/>
</dbReference>
<dbReference type="InterPro" id="IPR023088">
    <property type="entry name" value="PDEase"/>
</dbReference>
<dbReference type="InterPro" id="IPR002073">
    <property type="entry name" value="PDEase_catalytic_dom"/>
</dbReference>
<dbReference type="InterPro" id="IPR036971">
    <property type="entry name" value="PDEase_catalytic_dom_sf"/>
</dbReference>
<dbReference type="InterPro" id="IPR023174">
    <property type="entry name" value="PDEase_CS"/>
</dbReference>
<dbReference type="PANTHER" id="PTHR11347">
    <property type="entry name" value="CYCLIC NUCLEOTIDE PHOSPHODIESTERASE"/>
    <property type="match status" value="1"/>
</dbReference>
<dbReference type="Pfam" id="PF00233">
    <property type="entry name" value="PDEase_I"/>
    <property type="match status" value="1"/>
</dbReference>
<dbReference type="PRINTS" id="PR00387">
    <property type="entry name" value="PDIESTERASE1"/>
</dbReference>
<dbReference type="SUPFAM" id="SSF109604">
    <property type="entry name" value="HD-domain/PDEase-like"/>
    <property type="match status" value="1"/>
</dbReference>
<dbReference type="PROSITE" id="PS00126">
    <property type="entry name" value="PDEASE_I_1"/>
    <property type="match status" value="1"/>
</dbReference>
<dbReference type="PROSITE" id="PS51845">
    <property type="entry name" value="PDEASE_I_2"/>
    <property type="match status" value="1"/>
</dbReference>
<evidence type="ECO:0000250" key="1">
    <source>
        <dbReference type="UniProtKB" id="O76083"/>
    </source>
</evidence>
<evidence type="ECO:0000255" key="2"/>
<evidence type="ECO:0000255" key="3">
    <source>
        <dbReference type="PIRSR" id="PIRSR623088-1"/>
    </source>
</evidence>
<evidence type="ECO:0000255" key="4">
    <source>
        <dbReference type="PIRSR" id="PIRSR623088-3"/>
    </source>
</evidence>
<evidence type="ECO:0000255" key="5">
    <source>
        <dbReference type="PROSITE-ProRule" id="PRU00498"/>
    </source>
</evidence>
<evidence type="ECO:0000255" key="6">
    <source>
        <dbReference type="PROSITE-ProRule" id="PRU01192"/>
    </source>
</evidence>
<evidence type="ECO:0000255" key="7">
    <source>
        <dbReference type="RuleBase" id="RU363067"/>
    </source>
</evidence>
<evidence type="ECO:0000269" key="8">
    <source>
    </source>
</evidence>
<evidence type="ECO:0000269" key="9">
    <source>
    </source>
</evidence>
<evidence type="ECO:0000303" key="10">
    <source>
    </source>
</evidence>
<evidence type="ECO:0000303" key="11">
    <source>
    </source>
</evidence>
<evidence type="ECO:0000305" key="12"/>
<evidence type="ECO:0000305" key="13">
    <source>
    </source>
</evidence>
<evidence type="ECO:0000312" key="14">
    <source>
        <dbReference type="EMBL" id="ABS50260.1"/>
    </source>
</evidence>
<evidence type="ECO:0000312" key="15">
    <source>
        <dbReference type="EMBL" id="CZU00402.1"/>
    </source>
</evidence>
<evidence type="ECO:0000312" key="16">
    <source>
        <dbReference type="Proteomes" id="UP000001450"/>
    </source>
</evidence>
<proteinExistence type="evidence at protein level"/>
<comment type="function">
    <text evidence="8">Specifically hydrolyzes the second messenger cGMP, which is a key regulator of many important physiological processes (PubMed:18452584). Probably by regulating cGMP levels, required for activation of gametogenesis (PubMed:18452584).</text>
</comment>
<comment type="catalytic activity">
    <reaction evidence="13">
        <text>3',5'-cyclic GMP + H2O = GMP + H(+)</text>
        <dbReference type="Rhea" id="RHEA:16957"/>
        <dbReference type="ChEBI" id="CHEBI:15377"/>
        <dbReference type="ChEBI" id="CHEBI:15378"/>
        <dbReference type="ChEBI" id="CHEBI:57746"/>
        <dbReference type="ChEBI" id="CHEBI:58115"/>
        <dbReference type="EC" id="3.1.4.35"/>
    </reaction>
</comment>
<comment type="cofactor">
    <cofactor evidence="7">
        <name>a divalent metal cation</name>
        <dbReference type="ChEBI" id="CHEBI:60240"/>
    </cofactor>
    <text evidence="7">Binds 2 divalent metal cations per subunit. Site 1 may preferentially bind zinc ions, while site 2 has a preference for magnesium and/or manganese ions.</text>
</comment>
<comment type="pathway">
    <text evidence="8">Purine metabolism; 3',5'-cyclic GMP degradation; GMP from 3',5'-cyclic GMP: step 1/1.</text>
</comment>
<comment type="subcellular location">
    <subcellularLocation>
        <location evidence="2">Membrane</location>
        <topology evidence="2">Multi-pass membrane protein</topology>
    </subcellularLocation>
</comment>
<comment type="developmental stage">
    <text evidence="8 9">Expressed during the asexual blood stage, probably in gametocytes.</text>
</comment>
<comment type="disruption phenotype">
    <text evidence="8">Impaired gametogenesis (PubMed:18452584). Gametocytes are morphologically normal up to and including stage V of development; however, gametocytes fail to round up upon stimulation of gametogenesis with xanthurenic acid and levels of exflagellation are severely reduced (PubMed:18452584). Higher levels of intracellular cGMP in stages III to V gametocytes (PubMed:18452584).</text>
</comment>
<comment type="similarity">
    <text evidence="7">Belongs to the cyclic nucleotide phosphodiesterase family.</text>
</comment>
<keyword id="KW-0140">cGMP</keyword>
<keyword id="KW-0325">Glycoprotein</keyword>
<keyword id="KW-0378">Hydrolase</keyword>
<keyword id="KW-0472">Membrane</keyword>
<keyword id="KW-0479">Metal-binding</keyword>
<keyword id="KW-1185">Reference proteome</keyword>
<keyword id="KW-0812">Transmembrane</keyword>
<keyword id="KW-1133">Transmembrane helix</keyword>